<gene>
    <name evidence="1" type="primary">fdhD</name>
    <name type="synonym">narQ</name>
    <name type="ordered locus">BH2527</name>
</gene>
<evidence type="ECO:0000255" key="1">
    <source>
        <dbReference type="HAMAP-Rule" id="MF_00187"/>
    </source>
</evidence>
<organism>
    <name type="scientific">Halalkalibacterium halodurans (strain ATCC BAA-125 / DSM 18197 / FERM 7344 / JCM 9153 / C-125)</name>
    <name type="common">Bacillus halodurans</name>
    <dbReference type="NCBI Taxonomy" id="272558"/>
    <lineage>
        <taxon>Bacteria</taxon>
        <taxon>Bacillati</taxon>
        <taxon>Bacillota</taxon>
        <taxon>Bacilli</taxon>
        <taxon>Bacillales</taxon>
        <taxon>Bacillaceae</taxon>
        <taxon>Halalkalibacterium (ex Joshi et al. 2022)</taxon>
    </lineage>
</organism>
<proteinExistence type="inferred from homology"/>
<keyword id="KW-0963">Cytoplasm</keyword>
<keyword id="KW-0501">Molybdenum cofactor biosynthesis</keyword>
<keyword id="KW-1185">Reference proteome</keyword>
<feature type="chain" id="PRO_0000152887" description="Sulfur carrier protein FdhD">
    <location>
        <begin position="1"/>
        <end position="270"/>
    </location>
</feature>
<feature type="active site" description="Cysteine persulfide intermediate" evidence="1">
    <location>
        <position position="108"/>
    </location>
</feature>
<feature type="binding site" evidence="1">
    <location>
        <begin position="247"/>
        <end position="252"/>
    </location>
    <ligand>
        <name>Mo-bis(molybdopterin guanine dinucleotide)</name>
        <dbReference type="ChEBI" id="CHEBI:60539"/>
    </ligand>
</feature>
<comment type="function">
    <text evidence="1">Required for formate dehydrogenase (FDH) activity. Acts as a sulfur carrier protein that transfers sulfur from IscS to the molybdenum cofactor prior to its insertion into FDH.</text>
</comment>
<comment type="subcellular location">
    <subcellularLocation>
        <location evidence="1">Cytoplasm</location>
    </subcellularLocation>
</comment>
<comment type="similarity">
    <text evidence="1">Belongs to the FdhD family.</text>
</comment>
<sequence>MTNPMQATRKIISITDQNVVHREDQVAREYPLTIYVNDREFATMVCTQADLEEMVIGFLGSEGLIRFYKQDVASLSIDESRGFAYVSLTKELPTEWQFYSKRMIGSCCGKSRQSFYFHNDAKTAKTSMSRTTMTPEQCFRLMEALQEQSVIFQQTGGVHNAALATPEQMLISRTDIGRHNALDKLYGYCLMNGVPVRDKVLLFSGRISSEVLLKAAKIGVGIMLSKSAPTELALTMAEELNITTAGFIRDGRMNIYTVPERILTPKKEVQ</sequence>
<name>FDHD_HALH5</name>
<dbReference type="EMBL" id="BA000004">
    <property type="protein sequence ID" value="BAB06246.1"/>
    <property type="molecule type" value="Genomic_DNA"/>
</dbReference>
<dbReference type="PIR" id="G83965">
    <property type="entry name" value="G83965"/>
</dbReference>
<dbReference type="RefSeq" id="WP_010898678.1">
    <property type="nucleotide sequence ID" value="NC_002570.2"/>
</dbReference>
<dbReference type="SMR" id="Q9K9W8"/>
<dbReference type="STRING" id="272558.gene:10728425"/>
<dbReference type="KEGG" id="bha:BH2527"/>
<dbReference type="eggNOG" id="COG1526">
    <property type="taxonomic scope" value="Bacteria"/>
</dbReference>
<dbReference type="HOGENOM" id="CLU_056887_4_1_9"/>
<dbReference type="OrthoDB" id="9782042at2"/>
<dbReference type="Proteomes" id="UP000001258">
    <property type="component" value="Chromosome"/>
</dbReference>
<dbReference type="GO" id="GO:0005737">
    <property type="term" value="C:cytoplasm"/>
    <property type="evidence" value="ECO:0007669"/>
    <property type="project" value="UniProtKB-SubCell"/>
</dbReference>
<dbReference type="GO" id="GO:0097163">
    <property type="term" value="F:sulfur carrier activity"/>
    <property type="evidence" value="ECO:0007669"/>
    <property type="project" value="UniProtKB-UniRule"/>
</dbReference>
<dbReference type="GO" id="GO:0016783">
    <property type="term" value="F:sulfurtransferase activity"/>
    <property type="evidence" value="ECO:0007669"/>
    <property type="project" value="InterPro"/>
</dbReference>
<dbReference type="GO" id="GO:0006777">
    <property type="term" value="P:Mo-molybdopterin cofactor biosynthetic process"/>
    <property type="evidence" value="ECO:0007669"/>
    <property type="project" value="UniProtKB-UniRule"/>
</dbReference>
<dbReference type="Gene3D" id="3.10.20.10">
    <property type="match status" value="1"/>
</dbReference>
<dbReference type="Gene3D" id="3.40.140.10">
    <property type="entry name" value="Cytidine Deaminase, domain 2"/>
    <property type="match status" value="1"/>
</dbReference>
<dbReference type="HAMAP" id="MF_00187">
    <property type="entry name" value="FdhD"/>
    <property type="match status" value="1"/>
</dbReference>
<dbReference type="InterPro" id="IPR016193">
    <property type="entry name" value="Cytidine_deaminase-like"/>
</dbReference>
<dbReference type="InterPro" id="IPR003786">
    <property type="entry name" value="FdhD"/>
</dbReference>
<dbReference type="NCBIfam" id="TIGR00129">
    <property type="entry name" value="fdhD_narQ"/>
    <property type="match status" value="1"/>
</dbReference>
<dbReference type="PANTHER" id="PTHR30592">
    <property type="entry name" value="FORMATE DEHYDROGENASE"/>
    <property type="match status" value="1"/>
</dbReference>
<dbReference type="PANTHER" id="PTHR30592:SF1">
    <property type="entry name" value="SULFUR CARRIER PROTEIN FDHD"/>
    <property type="match status" value="1"/>
</dbReference>
<dbReference type="Pfam" id="PF02634">
    <property type="entry name" value="FdhD-NarQ"/>
    <property type="match status" value="1"/>
</dbReference>
<dbReference type="PIRSF" id="PIRSF015626">
    <property type="entry name" value="FdhD"/>
    <property type="match status" value="1"/>
</dbReference>
<dbReference type="SUPFAM" id="SSF53927">
    <property type="entry name" value="Cytidine deaminase-like"/>
    <property type="match status" value="1"/>
</dbReference>
<reference key="1">
    <citation type="journal article" date="2000" name="Nucleic Acids Res.">
        <title>Complete genome sequence of the alkaliphilic bacterium Bacillus halodurans and genomic sequence comparison with Bacillus subtilis.</title>
        <authorList>
            <person name="Takami H."/>
            <person name="Nakasone K."/>
            <person name="Takaki Y."/>
            <person name="Maeno G."/>
            <person name="Sasaki R."/>
            <person name="Masui N."/>
            <person name="Fuji F."/>
            <person name="Hirama C."/>
            <person name="Nakamura Y."/>
            <person name="Ogasawara N."/>
            <person name="Kuhara S."/>
            <person name="Horikoshi K."/>
        </authorList>
    </citation>
    <scope>NUCLEOTIDE SEQUENCE [LARGE SCALE GENOMIC DNA]</scope>
    <source>
        <strain>ATCC BAA-125 / DSM 18197 / FERM 7344 / JCM 9153 / C-125</strain>
    </source>
</reference>
<accession>Q9K9W8</accession>
<protein>
    <recommendedName>
        <fullName evidence="1">Sulfur carrier protein FdhD</fullName>
    </recommendedName>
</protein>